<keyword id="KW-0903">Direct protein sequencing</keyword>
<protein>
    <recommendedName>
        <fullName>92 kDa protein</fullName>
    </recommendedName>
</protein>
<proteinExistence type="evidence at protein level"/>
<feature type="chain" id="PRO_0000270972" description="92 kDa protein">
    <location>
        <begin position="1"/>
        <end position="10" status="greater than"/>
    </location>
</feature>
<feature type="non-terminal residue" evidence="2">
    <location>
        <position position="10"/>
    </location>
</feature>
<organism>
    <name type="scientific">Bacillus cereus</name>
    <dbReference type="NCBI Taxonomy" id="1396"/>
    <lineage>
        <taxon>Bacteria</taxon>
        <taxon>Bacillati</taxon>
        <taxon>Bacillota</taxon>
        <taxon>Bacilli</taxon>
        <taxon>Bacillales</taxon>
        <taxon>Bacillaceae</taxon>
        <taxon>Bacillus</taxon>
        <taxon>Bacillus cereus group</taxon>
    </lineage>
</organism>
<reference evidence="3" key="1">
    <citation type="journal article" date="2002" name="J. Appl. Microbiol.">
        <title>Acid stress in the food pathogen Bacillus cereus.</title>
        <authorList>
            <person name="Browne N."/>
            <person name="Dowds B.C.A."/>
        </authorList>
    </citation>
    <scope>PROTEIN SEQUENCE</scope>
    <source>
        <strain evidence="1">DSM 626 / NCIMB 11796 / T</strain>
    </source>
</reference>
<accession>P83062</accession>
<name>92KD_BACCE</name>
<comment type="miscellaneous">
    <text>Under acid-stress, this protein is expressed at a higher level in wild-type B.cereus than in the acid-sensitive mutant strain NB1.</text>
</comment>
<sequence length="10" mass="1045">AHPPEXLSIA</sequence>
<evidence type="ECO:0000269" key="1">
    <source>
    </source>
</evidence>
<evidence type="ECO:0000303" key="2">
    <source>
    </source>
</evidence>
<evidence type="ECO:0000305" key="3"/>